<comment type="subcellular location">
    <subcellularLocation>
        <location evidence="3">Membrane</location>
        <topology evidence="3">Multi-pass membrane protein</topology>
    </subcellularLocation>
</comment>
<comment type="miscellaneous">
    <text evidence="2">Present with 1920 molecules/cell in log phase SD medium.</text>
</comment>
<comment type="similarity">
    <text evidence="3">Belongs to the FUN14 family.</text>
</comment>
<dbReference type="EMBL" id="L05146">
    <property type="status" value="NOT_ANNOTATED_CDS"/>
    <property type="molecule type" value="Genomic_DNA"/>
</dbReference>
<dbReference type="EMBL" id="L22015">
    <property type="protein sequence ID" value="AAC04950.1"/>
    <property type="molecule type" value="Genomic_DNA"/>
</dbReference>
<dbReference type="EMBL" id="AY557707">
    <property type="protein sequence ID" value="AAS56033.1"/>
    <property type="molecule type" value="Genomic_DNA"/>
</dbReference>
<dbReference type="EMBL" id="M36073">
    <property type="protein sequence ID" value="AAA35074.2"/>
    <property type="molecule type" value="Genomic_DNA"/>
</dbReference>
<dbReference type="EMBL" id="BK006935">
    <property type="protein sequence ID" value="DAA06980.1"/>
    <property type="molecule type" value="Genomic_DNA"/>
</dbReference>
<dbReference type="PIR" id="S43447">
    <property type="entry name" value="S43447"/>
</dbReference>
<dbReference type="RefSeq" id="NP_009394.1">
    <property type="nucleotide sequence ID" value="NM_001178153.1"/>
</dbReference>
<dbReference type="BioGRID" id="31758">
    <property type="interactions" value="36"/>
</dbReference>
<dbReference type="FunCoup" id="P18411">
    <property type="interactions" value="60"/>
</dbReference>
<dbReference type="IntAct" id="P18411">
    <property type="interactions" value="4"/>
</dbReference>
<dbReference type="MINT" id="P18411"/>
<dbReference type="STRING" id="4932.YAL008W"/>
<dbReference type="PaxDb" id="4932-YAL008W"/>
<dbReference type="PeptideAtlas" id="P18411"/>
<dbReference type="EnsemblFungi" id="YAL008W_mRNA">
    <property type="protein sequence ID" value="YAL008W"/>
    <property type="gene ID" value="YAL008W"/>
</dbReference>
<dbReference type="GeneID" id="851225"/>
<dbReference type="KEGG" id="sce:YAL008W"/>
<dbReference type="AGR" id="SGD:S000000006"/>
<dbReference type="SGD" id="S000000006">
    <property type="gene designation" value="FUN14"/>
</dbReference>
<dbReference type="VEuPathDB" id="FungiDB:YAL008W"/>
<dbReference type="HOGENOM" id="CLU_1379105_0_0_1"/>
<dbReference type="InParanoid" id="P18411"/>
<dbReference type="OMA" id="GWIRINL"/>
<dbReference type="OrthoDB" id="3990500at2759"/>
<dbReference type="BioCyc" id="YEAST:G3O-28821-MONOMER"/>
<dbReference type="Reactome" id="R-SCE-8934903">
    <property type="pathway name" value="Receptor Mediated Mitophagy"/>
</dbReference>
<dbReference type="BioGRID-ORCS" id="851225">
    <property type="hits" value="3 hits in 10 CRISPR screens"/>
</dbReference>
<dbReference type="PRO" id="PR:P18411"/>
<dbReference type="Proteomes" id="UP000002311">
    <property type="component" value="Chromosome I"/>
</dbReference>
<dbReference type="RNAct" id="P18411">
    <property type="molecule type" value="protein"/>
</dbReference>
<dbReference type="GO" id="GO:0005741">
    <property type="term" value="C:mitochondrial outer membrane"/>
    <property type="evidence" value="ECO:0000314"/>
    <property type="project" value="SGD"/>
</dbReference>
<dbReference type="GO" id="GO:0005739">
    <property type="term" value="C:mitochondrion"/>
    <property type="evidence" value="ECO:0007005"/>
    <property type="project" value="SGD"/>
</dbReference>
<dbReference type="GO" id="GO:0000422">
    <property type="term" value="P:autophagy of mitochondrion"/>
    <property type="evidence" value="ECO:0000318"/>
    <property type="project" value="GO_Central"/>
</dbReference>
<dbReference type="GO" id="GO:0007005">
    <property type="term" value="P:mitochondrion organization"/>
    <property type="evidence" value="ECO:0000316"/>
    <property type="project" value="SGD"/>
</dbReference>
<dbReference type="GO" id="GO:0055091">
    <property type="term" value="P:phospholipid homeostasis"/>
    <property type="evidence" value="ECO:0000316"/>
    <property type="project" value="SGD"/>
</dbReference>
<dbReference type="InterPro" id="IPR007014">
    <property type="entry name" value="FUN14"/>
</dbReference>
<dbReference type="PANTHER" id="PTHR21346">
    <property type="entry name" value="FUN14 DOMAIN CONTAINING"/>
    <property type="match status" value="1"/>
</dbReference>
<dbReference type="PANTHER" id="PTHR21346:SF0">
    <property type="entry name" value="RE45833P"/>
    <property type="match status" value="1"/>
</dbReference>
<dbReference type="Pfam" id="PF04930">
    <property type="entry name" value="FUN14"/>
    <property type="match status" value="1"/>
</dbReference>
<name>FUN14_YEAST</name>
<gene>
    <name type="primary">FUN14</name>
    <name type="ordered locus">YAL008W</name>
</gene>
<accession>P18411</accession>
<accession>D6VPL0</accession>
<keyword id="KW-0472">Membrane</keyword>
<keyword id="KW-1185">Reference proteome</keyword>
<keyword id="KW-0812">Transmembrane</keyword>
<keyword id="KW-1133">Transmembrane helix</keyword>
<protein>
    <recommendedName>
        <fullName>Protein FUN14</fullName>
    </recommendedName>
</protein>
<reference key="1">
    <citation type="journal article" date="1994" name="Yeast">
        <title>Sequencing of chromosome I of Saccharomyces cerevisiae: analysis of the 42 kbp SPO7-CENI-CDC15 region.</title>
        <authorList>
            <person name="Clark M.W."/>
            <person name="Keng T."/>
            <person name="Storms R.K."/>
            <person name="Zhong W.-W."/>
            <person name="Fortin N."/>
            <person name="Zeng B."/>
            <person name="Delaney S."/>
            <person name="Ouellette B.F.F."/>
            <person name="Barton A.B."/>
            <person name="Kaback D.B."/>
            <person name="Bussey H."/>
        </authorList>
    </citation>
    <scope>NUCLEOTIDE SEQUENCE [GENOMIC DNA]</scope>
    <source>
        <strain>ATCC 204511 / S288c / AB972</strain>
    </source>
</reference>
<reference key="2">
    <citation type="journal article" date="1995" name="Proc. Natl. Acad. Sci. U.S.A.">
        <title>The nucleotide sequence of chromosome I from Saccharomyces cerevisiae.</title>
        <authorList>
            <person name="Bussey H."/>
            <person name="Kaback D.B."/>
            <person name="Zhong W.-W."/>
            <person name="Vo D.H."/>
            <person name="Clark M.W."/>
            <person name="Fortin N."/>
            <person name="Hall J."/>
            <person name="Ouellette B.F.F."/>
            <person name="Keng T."/>
            <person name="Barton A.B."/>
            <person name="Su Y."/>
            <person name="Davies C.J."/>
            <person name="Storms R.K."/>
        </authorList>
    </citation>
    <scope>NUCLEOTIDE SEQUENCE [LARGE SCALE GENOMIC DNA]</scope>
    <source>
        <strain>ATCC 204508 / S288c</strain>
    </source>
</reference>
<reference key="3">
    <citation type="journal article" date="2014" name="G3 (Bethesda)">
        <title>The reference genome sequence of Saccharomyces cerevisiae: Then and now.</title>
        <authorList>
            <person name="Engel S.R."/>
            <person name="Dietrich F.S."/>
            <person name="Fisk D.G."/>
            <person name="Binkley G."/>
            <person name="Balakrishnan R."/>
            <person name="Costanzo M.C."/>
            <person name="Dwight S.S."/>
            <person name="Hitz B.C."/>
            <person name="Karra K."/>
            <person name="Nash R.S."/>
            <person name="Weng S."/>
            <person name="Wong E.D."/>
            <person name="Lloyd P."/>
            <person name="Skrzypek M.S."/>
            <person name="Miyasato S.R."/>
            <person name="Simison M."/>
            <person name="Cherry J.M."/>
        </authorList>
    </citation>
    <scope>GENOME REANNOTATION</scope>
    <source>
        <strain>ATCC 204508 / S288c</strain>
    </source>
</reference>
<reference key="4">
    <citation type="journal article" date="2007" name="Genome Res.">
        <title>Approaching a complete repository of sequence-verified protein-encoding clones for Saccharomyces cerevisiae.</title>
        <authorList>
            <person name="Hu Y."/>
            <person name="Rolfs A."/>
            <person name="Bhullar B."/>
            <person name="Murthy T.V.S."/>
            <person name="Zhu C."/>
            <person name="Berger M.F."/>
            <person name="Camargo A.A."/>
            <person name="Kelley F."/>
            <person name="McCarron S."/>
            <person name="Jepson D."/>
            <person name="Richardson A."/>
            <person name="Raphael J."/>
            <person name="Moreira D."/>
            <person name="Taycher E."/>
            <person name="Zuo D."/>
            <person name="Mohr S."/>
            <person name="Kane M.F."/>
            <person name="Williamson J."/>
            <person name="Simpson A.J.G."/>
            <person name="Bulyk M.L."/>
            <person name="Harlow E."/>
            <person name="Marsischky G."/>
            <person name="Kolodner R.D."/>
            <person name="LaBaer J."/>
        </authorList>
    </citation>
    <scope>NUCLEOTIDE SEQUENCE [GENOMIC DNA]</scope>
    <source>
        <strain>ATCC 204508 / S288c</strain>
    </source>
</reference>
<reference key="5">
    <citation type="journal article" date="1990" name="Gene">
        <title>Molecular cloning of chromosome I DNA from Saccharomyces cerevisiae: isolation, characterization and regulation of the SPO7 sporulation gene.</title>
        <authorList>
            <person name="Whyte W."/>
            <person name="Koepp L.H."/>
            <person name="Lamb J."/>
            <person name="Crowley J.C."/>
            <person name="Kaback D.B."/>
        </authorList>
    </citation>
    <scope>NUCLEOTIDE SEQUENCE [GENOMIC DNA] OF 1-74</scope>
</reference>
<reference key="6">
    <citation type="journal article" date="2003" name="Nature">
        <title>Global analysis of protein expression in yeast.</title>
        <authorList>
            <person name="Ghaemmaghami S."/>
            <person name="Huh W.-K."/>
            <person name="Bower K."/>
            <person name="Howson R.W."/>
            <person name="Belle A."/>
            <person name="Dephoure N."/>
            <person name="O'Shea E.K."/>
            <person name="Weissman J.S."/>
        </authorList>
    </citation>
    <scope>LEVEL OF PROTEIN EXPRESSION [LARGE SCALE ANALYSIS]</scope>
</reference>
<feature type="chain" id="PRO_0000202412" description="Protein FUN14">
    <location>
        <begin position="1"/>
        <end position="198"/>
    </location>
</feature>
<feature type="transmembrane region" description="Helical" evidence="1">
    <location>
        <begin position="39"/>
        <end position="59"/>
    </location>
</feature>
<feature type="transmembrane region" description="Helical" evidence="1">
    <location>
        <begin position="112"/>
        <end position="132"/>
    </location>
</feature>
<feature type="transmembrane region" description="Helical" evidence="1">
    <location>
        <begin position="172"/>
        <end position="192"/>
    </location>
</feature>
<organism>
    <name type="scientific">Saccharomyces cerevisiae (strain ATCC 204508 / S288c)</name>
    <name type="common">Baker's yeast</name>
    <dbReference type="NCBI Taxonomy" id="559292"/>
    <lineage>
        <taxon>Eukaryota</taxon>
        <taxon>Fungi</taxon>
        <taxon>Dikarya</taxon>
        <taxon>Ascomycota</taxon>
        <taxon>Saccharomycotina</taxon>
        <taxon>Saccharomycetes</taxon>
        <taxon>Saccharomycetales</taxon>
        <taxon>Saccharomycetaceae</taxon>
        <taxon>Saccharomyces</taxon>
    </lineage>
</organism>
<evidence type="ECO:0000255" key="1"/>
<evidence type="ECO:0000269" key="2">
    <source>
    </source>
</evidence>
<evidence type="ECO:0000305" key="3"/>
<sequence>MTLAFNMQRLVFRNLNVGKRMFKNVPLWRFNVANKLGKPLTRSVGLGGAGIVAGGFYLMNRQPSKLIFNDSLGAAVKQQGPLEPTVGNSTAITEERRNKISSHKQMFLGSLFGVVLGVTVAKISILFMYVGITSMLLCEWLRYKGWIRINLKNIKSVIVLKDVDLKKLLIDGLLGTEYMGFKVFFTLSFVLASLNANK</sequence>
<proteinExistence type="evidence at protein level"/>